<reference key="1">
    <citation type="journal article" date="2008" name="Genome Res.">
        <title>Comparative genome analysis of Salmonella enteritidis PT4 and Salmonella gallinarum 287/91 provides insights into evolutionary and host adaptation pathways.</title>
        <authorList>
            <person name="Thomson N.R."/>
            <person name="Clayton D.J."/>
            <person name="Windhorst D."/>
            <person name="Vernikos G."/>
            <person name="Davidson S."/>
            <person name="Churcher C."/>
            <person name="Quail M.A."/>
            <person name="Stevens M."/>
            <person name="Jones M.A."/>
            <person name="Watson M."/>
            <person name="Barron A."/>
            <person name="Layton A."/>
            <person name="Pickard D."/>
            <person name="Kingsley R.A."/>
            <person name="Bignell A."/>
            <person name="Clark L."/>
            <person name="Harris B."/>
            <person name="Ormond D."/>
            <person name="Abdellah Z."/>
            <person name="Brooks K."/>
            <person name="Cherevach I."/>
            <person name="Chillingworth T."/>
            <person name="Woodward J."/>
            <person name="Norberczak H."/>
            <person name="Lord A."/>
            <person name="Arrowsmith C."/>
            <person name="Jagels K."/>
            <person name="Moule S."/>
            <person name="Mungall K."/>
            <person name="Saunders M."/>
            <person name="Whitehead S."/>
            <person name="Chabalgoity J.A."/>
            <person name="Maskell D."/>
            <person name="Humphreys T."/>
            <person name="Roberts M."/>
            <person name="Barrow P.A."/>
            <person name="Dougan G."/>
            <person name="Parkhill J."/>
        </authorList>
    </citation>
    <scope>NUCLEOTIDE SEQUENCE [LARGE SCALE GENOMIC DNA]</scope>
    <source>
        <strain>287/91 / NCTC 13346</strain>
    </source>
</reference>
<gene>
    <name evidence="1" type="primary">hemE</name>
    <name type="ordered locus">SG3439</name>
</gene>
<feature type="chain" id="PRO_1000100014" description="Uroporphyrinogen decarboxylase">
    <location>
        <begin position="1"/>
        <end position="354"/>
    </location>
</feature>
<feature type="binding site" evidence="1">
    <location>
        <begin position="27"/>
        <end position="31"/>
    </location>
    <ligand>
        <name>substrate</name>
    </ligand>
</feature>
<feature type="binding site" evidence="1">
    <location>
        <position position="77"/>
    </location>
    <ligand>
        <name>substrate</name>
    </ligand>
</feature>
<feature type="binding site" evidence="1">
    <location>
        <position position="154"/>
    </location>
    <ligand>
        <name>substrate</name>
    </ligand>
</feature>
<feature type="binding site" evidence="1">
    <location>
        <position position="209"/>
    </location>
    <ligand>
        <name>substrate</name>
    </ligand>
</feature>
<feature type="binding site" evidence="1">
    <location>
        <position position="327"/>
    </location>
    <ligand>
        <name>substrate</name>
    </ligand>
</feature>
<feature type="site" description="Transition state stabilizer" evidence="1">
    <location>
        <position position="77"/>
    </location>
</feature>
<name>DCUP_SALG2</name>
<evidence type="ECO:0000255" key="1">
    <source>
        <dbReference type="HAMAP-Rule" id="MF_00218"/>
    </source>
</evidence>
<protein>
    <recommendedName>
        <fullName evidence="1">Uroporphyrinogen decarboxylase</fullName>
        <shortName evidence="1">UPD</shortName>
        <shortName evidence="1">URO-D</shortName>
        <ecNumber evidence="1">4.1.1.37</ecNumber>
    </recommendedName>
</protein>
<dbReference type="EC" id="4.1.1.37" evidence="1"/>
<dbReference type="EMBL" id="AM933173">
    <property type="protein sequence ID" value="CAR39230.1"/>
    <property type="molecule type" value="Genomic_DNA"/>
</dbReference>
<dbReference type="RefSeq" id="WP_000137619.1">
    <property type="nucleotide sequence ID" value="NC_011274.1"/>
</dbReference>
<dbReference type="SMR" id="B5RFI7"/>
<dbReference type="KEGG" id="seg:SG3439"/>
<dbReference type="HOGENOM" id="CLU_040933_0_0_6"/>
<dbReference type="UniPathway" id="UPA00251">
    <property type="reaction ID" value="UER00321"/>
</dbReference>
<dbReference type="Proteomes" id="UP000008321">
    <property type="component" value="Chromosome"/>
</dbReference>
<dbReference type="GO" id="GO:0005829">
    <property type="term" value="C:cytosol"/>
    <property type="evidence" value="ECO:0007669"/>
    <property type="project" value="TreeGrafter"/>
</dbReference>
<dbReference type="GO" id="GO:0004853">
    <property type="term" value="F:uroporphyrinogen decarboxylase activity"/>
    <property type="evidence" value="ECO:0007669"/>
    <property type="project" value="UniProtKB-UniRule"/>
</dbReference>
<dbReference type="GO" id="GO:0019353">
    <property type="term" value="P:protoporphyrinogen IX biosynthetic process from glutamate"/>
    <property type="evidence" value="ECO:0007669"/>
    <property type="project" value="TreeGrafter"/>
</dbReference>
<dbReference type="CDD" id="cd00717">
    <property type="entry name" value="URO-D"/>
    <property type="match status" value="1"/>
</dbReference>
<dbReference type="FunFam" id="3.20.20.210:FF:000001">
    <property type="entry name" value="Uroporphyrinogen decarboxylase"/>
    <property type="match status" value="1"/>
</dbReference>
<dbReference type="Gene3D" id="3.20.20.210">
    <property type="match status" value="1"/>
</dbReference>
<dbReference type="HAMAP" id="MF_00218">
    <property type="entry name" value="URO_D"/>
    <property type="match status" value="1"/>
</dbReference>
<dbReference type="InterPro" id="IPR038071">
    <property type="entry name" value="UROD/MetE-like_sf"/>
</dbReference>
<dbReference type="InterPro" id="IPR006361">
    <property type="entry name" value="Uroporphyrinogen_deCO2ase_HemE"/>
</dbReference>
<dbReference type="InterPro" id="IPR000257">
    <property type="entry name" value="Uroporphyrinogen_deCOase"/>
</dbReference>
<dbReference type="NCBIfam" id="TIGR01464">
    <property type="entry name" value="hemE"/>
    <property type="match status" value="1"/>
</dbReference>
<dbReference type="PANTHER" id="PTHR21091">
    <property type="entry name" value="METHYLTETRAHYDROFOLATE:HOMOCYSTEINE METHYLTRANSFERASE RELATED"/>
    <property type="match status" value="1"/>
</dbReference>
<dbReference type="PANTHER" id="PTHR21091:SF169">
    <property type="entry name" value="UROPORPHYRINOGEN DECARBOXYLASE"/>
    <property type="match status" value="1"/>
</dbReference>
<dbReference type="Pfam" id="PF01208">
    <property type="entry name" value="URO-D"/>
    <property type="match status" value="1"/>
</dbReference>
<dbReference type="SUPFAM" id="SSF51726">
    <property type="entry name" value="UROD/MetE-like"/>
    <property type="match status" value="1"/>
</dbReference>
<dbReference type="PROSITE" id="PS00906">
    <property type="entry name" value="UROD_1"/>
    <property type="match status" value="1"/>
</dbReference>
<dbReference type="PROSITE" id="PS00907">
    <property type="entry name" value="UROD_2"/>
    <property type="match status" value="1"/>
</dbReference>
<organism>
    <name type="scientific">Salmonella gallinarum (strain 287/91 / NCTC 13346)</name>
    <dbReference type="NCBI Taxonomy" id="550538"/>
    <lineage>
        <taxon>Bacteria</taxon>
        <taxon>Pseudomonadati</taxon>
        <taxon>Pseudomonadota</taxon>
        <taxon>Gammaproteobacteria</taxon>
        <taxon>Enterobacterales</taxon>
        <taxon>Enterobacteriaceae</taxon>
        <taxon>Salmonella</taxon>
    </lineage>
</organism>
<proteinExistence type="inferred from homology"/>
<accession>B5RFI7</accession>
<comment type="function">
    <text evidence="1">Catalyzes the decarboxylation of four acetate groups of uroporphyrinogen-III to yield coproporphyrinogen-III.</text>
</comment>
<comment type="catalytic activity">
    <reaction evidence="1">
        <text>uroporphyrinogen III + 4 H(+) = coproporphyrinogen III + 4 CO2</text>
        <dbReference type="Rhea" id="RHEA:19865"/>
        <dbReference type="ChEBI" id="CHEBI:15378"/>
        <dbReference type="ChEBI" id="CHEBI:16526"/>
        <dbReference type="ChEBI" id="CHEBI:57308"/>
        <dbReference type="ChEBI" id="CHEBI:57309"/>
        <dbReference type="EC" id="4.1.1.37"/>
    </reaction>
</comment>
<comment type="pathway">
    <text evidence="1">Porphyrin-containing compound metabolism; protoporphyrin-IX biosynthesis; coproporphyrinogen-III from 5-aminolevulinate: step 4/4.</text>
</comment>
<comment type="subunit">
    <text evidence="1">Homodimer.</text>
</comment>
<comment type="subcellular location">
    <subcellularLocation>
        <location evidence="1">Cytoplasm</location>
    </subcellularLocation>
</comment>
<comment type="similarity">
    <text evidence="1">Belongs to the uroporphyrinogen decarboxylase family.</text>
</comment>
<keyword id="KW-0963">Cytoplasm</keyword>
<keyword id="KW-0210">Decarboxylase</keyword>
<keyword id="KW-0456">Lyase</keyword>
<keyword id="KW-0627">Porphyrin biosynthesis</keyword>
<sequence length="354" mass="39176">MTELKNDRYLRALLRQPVDVTPVWMMRQAGRYLPEYKATRAQAGDFMSLCKNAELACEVTLQPLRRYPLDAAILFSDILTIPDAMGLGLYFEAGEGPRFTAPVTCKADVDKLPIPDPEDELGYVMNAVRTIRRELKGEVPLIGFSGSPWTLATYMVEGGSSKAFTVIKKMMYADPQALHLLLDKLAKSVTLYLNAQIKAGAQSVMIFDTWGGVLTGRDYQQFSLYYMHKIVDGLLRENDGRRVPVTLFTKGGGQWLEAMAETGCDALGLDWTTDIADARRRVGHKVALQGNMDPSMLYAPPARIEDEVATILAGFGQGEGHVFNLGHGIHQDVPPEHAGAFVEAVHRLSAQYHN</sequence>